<evidence type="ECO:0000250" key="1">
    <source>
        <dbReference type="UniProtKB" id="Q99210"/>
    </source>
</evidence>
<evidence type="ECO:0000305" key="2"/>
<reference key="1">
    <citation type="journal article" date="2005" name="Nature">
        <title>The genome of the social amoeba Dictyostelium discoideum.</title>
        <authorList>
            <person name="Eichinger L."/>
            <person name="Pachebat J.A."/>
            <person name="Gloeckner G."/>
            <person name="Rajandream M.A."/>
            <person name="Sucgang R."/>
            <person name="Berriman M."/>
            <person name="Song J."/>
            <person name="Olsen R."/>
            <person name="Szafranski K."/>
            <person name="Xu Q."/>
            <person name="Tunggal B."/>
            <person name="Kummerfeld S."/>
            <person name="Madera M."/>
            <person name="Konfortov B.A."/>
            <person name="Rivero F."/>
            <person name="Bankier A.T."/>
            <person name="Lehmann R."/>
            <person name="Hamlin N."/>
            <person name="Davies R."/>
            <person name="Gaudet P."/>
            <person name="Fey P."/>
            <person name="Pilcher K."/>
            <person name="Chen G."/>
            <person name="Saunders D."/>
            <person name="Sodergren E.J."/>
            <person name="Davis P."/>
            <person name="Kerhornou A."/>
            <person name="Nie X."/>
            <person name="Hall N."/>
            <person name="Anjard C."/>
            <person name="Hemphill L."/>
            <person name="Bason N."/>
            <person name="Farbrother P."/>
            <person name="Desany B."/>
            <person name="Just E."/>
            <person name="Morio T."/>
            <person name="Rost R."/>
            <person name="Churcher C.M."/>
            <person name="Cooper J."/>
            <person name="Haydock S."/>
            <person name="van Driessche N."/>
            <person name="Cronin A."/>
            <person name="Goodhead I."/>
            <person name="Muzny D.M."/>
            <person name="Mourier T."/>
            <person name="Pain A."/>
            <person name="Lu M."/>
            <person name="Harper D."/>
            <person name="Lindsay R."/>
            <person name="Hauser H."/>
            <person name="James K.D."/>
            <person name="Quiles M."/>
            <person name="Madan Babu M."/>
            <person name="Saito T."/>
            <person name="Buchrieser C."/>
            <person name="Wardroper A."/>
            <person name="Felder M."/>
            <person name="Thangavelu M."/>
            <person name="Johnson D."/>
            <person name="Knights A."/>
            <person name="Loulseged H."/>
            <person name="Mungall K.L."/>
            <person name="Oliver K."/>
            <person name="Price C."/>
            <person name="Quail M.A."/>
            <person name="Urushihara H."/>
            <person name="Hernandez J."/>
            <person name="Rabbinowitsch E."/>
            <person name="Steffen D."/>
            <person name="Sanders M."/>
            <person name="Ma J."/>
            <person name="Kohara Y."/>
            <person name="Sharp S."/>
            <person name="Simmonds M.N."/>
            <person name="Spiegler S."/>
            <person name="Tivey A."/>
            <person name="Sugano S."/>
            <person name="White B."/>
            <person name="Walker D."/>
            <person name="Woodward J.R."/>
            <person name="Winckler T."/>
            <person name="Tanaka Y."/>
            <person name="Shaulsky G."/>
            <person name="Schleicher M."/>
            <person name="Weinstock G.M."/>
            <person name="Rosenthal A."/>
            <person name="Cox E.C."/>
            <person name="Chisholm R.L."/>
            <person name="Gibbs R.A."/>
            <person name="Loomis W.F."/>
            <person name="Platzer M."/>
            <person name="Kay R.R."/>
            <person name="Williams J.G."/>
            <person name="Dear P.H."/>
            <person name="Noegel A.A."/>
            <person name="Barrell B.G."/>
            <person name="Kuspa A."/>
        </authorList>
    </citation>
    <scope>NUCLEOTIDE SEQUENCE [LARGE SCALE GENOMIC DNA]</scope>
    <source>
        <strain>AX4</strain>
    </source>
</reference>
<dbReference type="EC" id="3.6.1.9" evidence="1"/>
<dbReference type="EMBL" id="AAFI02000003">
    <property type="protein sequence ID" value="EAL73379.1"/>
    <property type="molecule type" value="Genomic_DNA"/>
</dbReference>
<dbReference type="RefSeq" id="XP_647355.1">
    <property type="nucleotide sequence ID" value="XM_642263.1"/>
</dbReference>
<dbReference type="SMR" id="Q55G28"/>
<dbReference type="STRING" id="44689.Q55G28"/>
<dbReference type="PaxDb" id="44689-DDB0305286"/>
<dbReference type="EnsemblProtists" id="EAL73379">
    <property type="protein sequence ID" value="EAL73379"/>
    <property type="gene ID" value="DDB_G0267852"/>
</dbReference>
<dbReference type="GeneID" id="8616166"/>
<dbReference type="KEGG" id="ddi:DDB_G0267852"/>
<dbReference type="dictyBase" id="DDB_G0267852"/>
<dbReference type="VEuPathDB" id="AmoebaDB:DDB_G0267852"/>
<dbReference type="eggNOG" id="KOG1509">
    <property type="taxonomic scope" value="Eukaryota"/>
</dbReference>
<dbReference type="HOGENOM" id="CLU_040416_0_2_1"/>
<dbReference type="InParanoid" id="Q55G28"/>
<dbReference type="OMA" id="VIGCDSV"/>
<dbReference type="PhylomeDB" id="Q55G28"/>
<dbReference type="PRO" id="PR:Q55G28"/>
<dbReference type="Proteomes" id="UP000002195">
    <property type="component" value="Chromosome 1"/>
</dbReference>
<dbReference type="GO" id="GO:0005737">
    <property type="term" value="C:cytoplasm"/>
    <property type="evidence" value="ECO:0007669"/>
    <property type="project" value="UniProtKB-SubCell"/>
</dbReference>
<dbReference type="GO" id="GO:0047429">
    <property type="term" value="F:nucleoside triphosphate diphosphatase activity"/>
    <property type="evidence" value="ECO:0000318"/>
    <property type="project" value="GO_Central"/>
</dbReference>
<dbReference type="CDD" id="cd00555">
    <property type="entry name" value="Maf"/>
    <property type="match status" value="1"/>
</dbReference>
<dbReference type="Gene3D" id="3.90.950.10">
    <property type="match status" value="1"/>
</dbReference>
<dbReference type="HAMAP" id="MF_00528">
    <property type="entry name" value="Maf"/>
    <property type="match status" value="1"/>
</dbReference>
<dbReference type="InterPro" id="IPR029001">
    <property type="entry name" value="ITPase-like_fam"/>
</dbReference>
<dbReference type="InterPro" id="IPR003697">
    <property type="entry name" value="Maf-like"/>
</dbReference>
<dbReference type="NCBIfam" id="TIGR00172">
    <property type="entry name" value="maf"/>
    <property type="match status" value="1"/>
</dbReference>
<dbReference type="PANTHER" id="PTHR43213">
    <property type="entry name" value="BIFUNCTIONAL DTTP/UTP PYROPHOSPHATASE/METHYLTRANSFERASE PROTEIN-RELATED"/>
    <property type="match status" value="1"/>
</dbReference>
<dbReference type="PANTHER" id="PTHR43213:SF5">
    <property type="entry name" value="BIFUNCTIONAL DTTP_UTP PYROPHOSPHATASE_METHYLTRANSFERASE PROTEIN-RELATED"/>
    <property type="match status" value="1"/>
</dbReference>
<dbReference type="Pfam" id="PF02545">
    <property type="entry name" value="Maf"/>
    <property type="match status" value="1"/>
</dbReference>
<dbReference type="PIRSF" id="PIRSF006305">
    <property type="entry name" value="Maf"/>
    <property type="match status" value="1"/>
</dbReference>
<dbReference type="SUPFAM" id="SSF52972">
    <property type="entry name" value="ITPase-like"/>
    <property type="match status" value="1"/>
</dbReference>
<proteinExistence type="inferred from homology"/>
<protein>
    <recommendedName>
        <fullName evidence="1">Nucleoside triphosphate pyrophosphatase</fullName>
        <ecNumber evidence="1">3.6.1.9</ecNumber>
    </recommendedName>
    <alternativeName>
        <fullName>Maf-like protein DDB_G0267852</fullName>
    </alternativeName>
    <alternativeName>
        <fullName evidence="1">Nucleotide pyrophosphatase</fullName>
        <shortName evidence="1">Nucleotide PPase</shortName>
    </alternativeName>
</protein>
<keyword id="KW-0963">Cytoplasm</keyword>
<keyword id="KW-0378">Hydrolase</keyword>
<keyword id="KW-1185">Reference proteome</keyword>
<gene>
    <name type="ORF">DDB_G0267852</name>
</gene>
<organism>
    <name type="scientific">Dictyostelium discoideum</name>
    <name type="common">Social amoeba</name>
    <dbReference type="NCBI Taxonomy" id="44689"/>
    <lineage>
        <taxon>Eukaryota</taxon>
        <taxon>Amoebozoa</taxon>
        <taxon>Evosea</taxon>
        <taxon>Eumycetozoa</taxon>
        <taxon>Dictyostelia</taxon>
        <taxon>Dictyosteliales</taxon>
        <taxon>Dictyosteliaceae</taxon>
        <taxon>Dictyostelium</taxon>
    </lineage>
</organism>
<feature type="chain" id="PRO_0000331373" description="Nucleoside triphosphate pyrophosphatase">
    <location>
        <begin position="1"/>
        <end position="216"/>
    </location>
</feature>
<feature type="active site" description="Proton acceptor" evidence="1">
    <location>
        <position position="86"/>
    </location>
</feature>
<sequence length="216" mass="24511">MILDILVKLNKLKIILASTSPRRIEYLGKLGVKFEIVESKFKEDLDKSQFQSVYDYCLENAKLKAIHAGIQLKEQNQQPNIIIGSDSIVVYDNKIFEKPKSLEEAKSMLTLLSGKIHTVCTAVHIEFFNENTNSKGSSSFYTLTNVEFDQLSPELINYYVDNFKPLDKAGSYGIQQTPAASFIKSINGDFYNVTGLPIHDLSINLRKIYVDNFLEK</sequence>
<accession>Q55G28</accession>
<comment type="function">
    <text evidence="1">Nucleoside triphosphate pyrophosphatase. May have a dual role in cell division arrest and in preventing the incorporation of modified nucleotides into cellular nucleic acids.</text>
</comment>
<comment type="catalytic activity">
    <reaction evidence="2">
        <text>a ribonucleoside 5'-triphosphate + H2O = a ribonucleoside 5'-phosphate + diphosphate + H(+)</text>
        <dbReference type="Rhea" id="RHEA:23996"/>
        <dbReference type="ChEBI" id="CHEBI:15377"/>
        <dbReference type="ChEBI" id="CHEBI:15378"/>
        <dbReference type="ChEBI" id="CHEBI:33019"/>
        <dbReference type="ChEBI" id="CHEBI:58043"/>
        <dbReference type="ChEBI" id="CHEBI:61557"/>
        <dbReference type="EC" id="3.6.1.9"/>
    </reaction>
</comment>
<comment type="catalytic activity">
    <reaction evidence="2">
        <text>a 2'-deoxyribonucleoside 5'-triphosphate + H2O = a 2'-deoxyribonucleoside 5'-phosphate + diphosphate + H(+)</text>
        <dbReference type="Rhea" id="RHEA:44644"/>
        <dbReference type="ChEBI" id="CHEBI:15377"/>
        <dbReference type="ChEBI" id="CHEBI:15378"/>
        <dbReference type="ChEBI" id="CHEBI:33019"/>
        <dbReference type="ChEBI" id="CHEBI:61560"/>
        <dbReference type="ChEBI" id="CHEBI:65317"/>
        <dbReference type="EC" id="3.6.1.9"/>
    </reaction>
</comment>
<comment type="cofactor">
    <cofactor evidence="1">
        <name>a divalent metal cation</name>
        <dbReference type="ChEBI" id="CHEBI:60240"/>
    </cofactor>
</comment>
<comment type="subcellular location">
    <subcellularLocation>
        <location evidence="2">Cytoplasm</location>
    </subcellularLocation>
</comment>
<comment type="similarity">
    <text evidence="2">Belongs to the Maf family.</text>
</comment>
<name>NTPP_DICDI</name>